<dbReference type="EMBL" id="AE001363">
    <property type="protein sequence ID" value="AAD18610.1"/>
    <property type="molecule type" value="Genomic_DNA"/>
</dbReference>
<dbReference type="EMBL" id="AE002161">
    <property type="protein sequence ID" value="AAF38141.1"/>
    <property type="molecule type" value="Genomic_DNA"/>
</dbReference>
<dbReference type="EMBL" id="BA000008">
    <property type="protein sequence ID" value="BAA98677.1"/>
    <property type="molecule type" value="Genomic_DNA"/>
</dbReference>
<dbReference type="EMBL" id="AE009440">
    <property type="protein sequence ID" value="AAP98420.1"/>
    <property type="molecule type" value="Genomic_DNA"/>
</dbReference>
<dbReference type="PIR" id="C72075">
    <property type="entry name" value="C72075"/>
</dbReference>
<dbReference type="PIR" id="C86549">
    <property type="entry name" value="C86549"/>
</dbReference>
<dbReference type="PIR" id="D81594">
    <property type="entry name" value="D81594"/>
</dbReference>
<dbReference type="RefSeq" id="NP_224667.1">
    <property type="nucleotide sequence ID" value="NC_000922.1"/>
</dbReference>
<dbReference type="RefSeq" id="WP_010883109.1">
    <property type="nucleotide sequence ID" value="NZ_LN847257.1"/>
</dbReference>
<dbReference type="RefSeq" id="WP_010892014.1">
    <property type="nucleotide sequence ID" value="NZ_LN846995.1"/>
</dbReference>
<dbReference type="GeneID" id="45050516"/>
<dbReference type="KEGG" id="cpa:CP_0283"/>
<dbReference type="KEGG" id="cpj:pmp_18"/>
<dbReference type="KEGG" id="cpn:CPn_0471"/>
<dbReference type="KEGG" id="cpt:CpB0489"/>
<dbReference type="PATRIC" id="fig|115713.3.peg.527"/>
<dbReference type="eggNOG" id="COG3210">
    <property type="taxonomic scope" value="Bacteria"/>
</dbReference>
<dbReference type="HOGENOM" id="CLU_004549_2_0_0"/>
<dbReference type="OrthoDB" id="16673at2"/>
<dbReference type="Proteomes" id="UP000000583">
    <property type="component" value="Chromosome"/>
</dbReference>
<dbReference type="Proteomes" id="UP000000801">
    <property type="component" value="Chromosome"/>
</dbReference>
<dbReference type="GO" id="GO:0009279">
    <property type="term" value="C:cell outer membrane"/>
    <property type="evidence" value="ECO:0007669"/>
    <property type="project" value="UniProtKB-SubCell"/>
</dbReference>
<dbReference type="GO" id="GO:0005576">
    <property type="term" value="C:extracellular region"/>
    <property type="evidence" value="ECO:0007669"/>
    <property type="project" value="UniProtKB-KW"/>
</dbReference>
<dbReference type="Gene3D" id="2.40.128.130">
    <property type="entry name" value="Autotransporter beta-domain"/>
    <property type="match status" value="1"/>
</dbReference>
<dbReference type="InterPro" id="IPR005546">
    <property type="entry name" value="Autotransporte_beta"/>
</dbReference>
<dbReference type="InterPro" id="IPR036709">
    <property type="entry name" value="Autotransporte_beta_dom_sf"/>
</dbReference>
<dbReference type="InterPro" id="IPR011427">
    <property type="entry name" value="Polymorphic_membr_middle"/>
</dbReference>
<dbReference type="InterPro" id="IPR003368">
    <property type="entry name" value="POMP_repeat"/>
</dbReference>
<dbReference type="NCBIfam" id="TIGR01376">
    <property type="entry name" value="POMP_repeat"/>
    <property type="match status" value="3"/>
</dbReference>
<dbReference type="Pfam" id="PF03797">
    <property type="entry name" value="Autotransporter"/>
    <property type="match status" value="1"/>
</dbReference>
<dbReference type="Pfam" id="PF02415">
    <property type="entry name" value="Chlam_PMP"/>
    <property type="match status" value="3"/>
</dbReference>
<dbReference type="Pfam" id="PF07548">
    <property type="entry name" value="ChlamPMP_M"/>
    <property type="match status" value="1"/>
</dbReference>
<dbReference type="SMART" id="SM00869">
    <property type="entry name" value="Autotransporter"/>
    <property type="match status" value="1"/>
</dbReference>
<dbReference type="SUPFAM" id="SSF103515">
    <property type="entry name" value="Autotransporter"/>
    <property type="match status" value="1"/>
</dbReference>
<dbReference type="PROSITE" id="PS51208">
    <property type="entry name" value="AUTOTRANSPORTER"/>
    <property type="match status" value="1"/>
</dbReference>
<reference key="1">
    <citation type="journal article" date="1999" name="Nat. Genet.">
        <title>Comparative genomes of Chlamydia pneumoniae and C. trachomatis.</title>
        <authorList>
            <person name="Kalman S."/>
            <person name="Mitchell W.P."/>
            <person name="Marathe R."/>
            <person name="Lammel C.J."/>
            <person name="Fan J."/>
            <person name="Hyman R.W."/>
            <person name="Olinger L."/>
            <person name="Grimwood J."/>
            <person name="Davis R.W."/>
            <person name="Stephens R.S."/>
        </authorList>
    </citation>
    <scope>NUCLEOTIDE SEQUENCE [LARGE SCALE GENOMIC DNA]</scope>
    <source>
        <strain>CWL029</strain>
    </source>
</reference>
<reference key="2">
    <citation type="journal article" date="2000" name="Nucleic Acids Res.">
        <title>Genome sequences of Chlamydia trachomatis MoPn and Chlamydia pneumoniae AR39.</title>
        <authorList>
            <person name="Read T.D."/>
            <person name="Brunham R.C."/>
            <person name="Shen C."/>
            <person name="Gill S.R."/>
            <person name="Heidelberg J.F."/>
            <person name="White O."/>
            <person name="Hickey E.K."/>
            <person name="Peterson J.D."/>
            <person name="Utterback T.R."/>
            <person name="Berry K.J."/>
            <person name="Bass S."/>
            <person name="Linher K.D."/>
            <person name="Weidman J.F."/>
            <person name="Khouri H.M."/>
            <person name="Craven B."/>
            <person name="Bowman C."/>
            <person name="Dodson R.J."/>
            <person name="Gwinn M.L."/>
            <person name="Nelson W.C."/>
            <person name="DeBoy R.T."/>
            <person name="Kolonay J.F."/>
            <person name="McClarty G."/>
            <person name="Salzberg S.L."/>
            <person name="Eisen J.A."/>
            <person name="Fraser C.M."/>
        </authorList>
    </citation>
    <scope>NUCLEOTIDE SEQUENCE [LARGE SCALE GENOMIC DNA]</scope>
    <source>
        <strain>AR39</strain>
    </source>
</reference>
<reference key="3">
    <citation type="journal article" date="2000" name="Nucleic Acids Res.">
        <title>Comparison of whole genome sequences of Chlamydia pneumoniae J138 from Japan and CWL029 from USA.</title>
        <authorList>
            <person name="Shirai M."/>
            <person name="Hirakawa H."/>
            <person name="Kimoto M."/>
            <person name="Tabuchi M."/>
            <person name="Kishi F."/>
            <person name="Ouchi K."/>
            <person name="Shiba T."/>
            <person name="Ishii K."/>
            <person name="Hattori M."/>
            <person name="Kuhara S."/>
            <person name="Nakazawa T."/>
        </authorList>
    </citation>
    <scope>NUCLEOTIDE SEQUENCE [LARGE SCALE GENOMIC DNA]</scope>
    <source>
        <strain>J138</strain>
    </source>
</reference>
<reference key="4">
    <citation type="submission" date="2002-05" db="EMBL/GenBank/DDBJ databases">
        <title>The genome sequence of Chlamydia pneumoniae TW183 and comparison with other Chlamydia strains based on whole genome sequence analysis.</title>
        <authorList>
            <person name="Geng M.M."/>
            <person name="Schuhmacher A."/>
            <person name="Muehldorfer I."/>
            <person name="Bensch K.W."/>
            <person name="Schaefer K.P."/>
            <person name="Schneider S."/>
            <person name="Pohl T."/>
            <person name="Essig A."/>
            <person name="Marre R."/>
            <person name="Melchers K."/>
        </authorList>
    </citation>
    <scope>NUCLEOTIDE SEQUENCE [LARGE SCALE GENOMIC DNA]</scope>
    <source>
        <strain>TW-183</strain>
    </source>
</reference>
<accession>Q9Z880</accession>
<accession>Q9RB60</accession>
<comment type="subcellular location">
    <subcellularLocation>
        <location>Secreted</location>
        <location>Cell wall</location>
    </subcellularLocation>
    <subcellularLocation>
        <location evidence="3">Cell outer membrane</location>
        <topology evidence="3">Peripheral membrane protein</topology>
        <orientation evidence="3">Extracellular side</orientation>
    </subcellularLocation>
</comment>
<comment type="developmental stage">
    <text>Elementary body.</text>
</comment>
<comment type="similarity">
    <text evidence="3">Belongs to the PMP outer membrane protein family.</text>
</comment>
<name>PMP18_CHLPN</name>
<protein>
    <recommendedName>
        <fullName>Probable outer membrane protein pmp18</fullName>
    </recommendedName>
    <alternativeName>
        <fullName>Polymorphic membrane protein 18</fullName>
    </alternativeName>
</protein>
<keyword id="KW-0998">Cell outer membrane</keyword>
<keyword id="KW-0134">Cell wall</keyword>
<keyword id="KW-0472">Membrane</keyword>
<keyword id="KW-0964">Secreted</keyword>
<keyword id="KW-0732">Signal</keyword>
<keyword id="KW-0812">Transmembrane</keyword>
<keyword id="KW-1134">Transmembrane beta strand</keyword>
<proteinExistence type="evidence at transcript level"/>
<feature type="signal peptide" evidence="1">
    <location>
        <begin position="1"/>
        <end position="16"/>
    </location>
</feature>
<feature type="chain" id="PRO_0000024747" description="Probable outer membrane protein pmp18">
    <location>
        <begin position="17"/>
        <end position="946"/>
    </location>
</feature>
<feature type="domain" description="Autotransporter" evidence="2">
    <location>
        <begin position="668"/>
        <end position="946"/>
    </location>
</feature>
<feature type="sequence conflict" description="In Ref. 1; AAD18610." evidence="3" ref="1">
    <original>A</original>
    <variation>T</variation>
    <location>
        <position position="426"/>
    </location>
</feature>
<feature type="sequence conflict" description="In Ref. 1; AAD18610." evidence="3" ref="1">
    <original>V</original>
    <variation>I</variation>
    <location>
        <position position="882"/>
    </location>
</feature>
<evidence type="ECO:0000255" key="1"/>
<evidence type="ECO:0000255" key="2">
    <source>
        <dbReference type="PROSITE-ProRule" id="PRU00556"/>
    </source>
</evidence>
<evidence type="ECO:0000305" key="3"/>
<sequence length="946" mass="103612">MQNNRSLSKSSFFVGALILGKTTILLNATPLSDYFDNQANQLTTLFPLIDTLTNMTPYSHRATLFGVRDDTNQDIVLDHQNSIESWFENFSQDGGALSCKSLAITNTKNQILFLNSFAIKRAGAMYVNGNFDLSENHGSIIFSGNLSFPNASNFADTCTGGAVLCSKNVTISKNQGTAYFINNKAKSSGGAIQAAIINIKDNTGPCLFFNNAAGGTAGGALFANACRIENNSQPIYFLNNQSGLGGAIRVHQECILTKNTGSVIFNNNFAMEADISANHSSGGAIYCISCSIKDNPGIAAFDNNTAARDGGAICTQSLTIQDSGPVYFTNNQGTWGGAIMLRQDGACTLFADQGDIIFYNNRHFKDTFSNHVSVNCTRNVSLTVGASQGHSATFYDPILQRYTIQNSIQKFNPNPEHLGTILFSSAYIPDTSTSRDDFISHFRNHIGLYNGTLALEDRAEWKVYKFDQFGGTLRLGSRAVFSTTDEEQSSSSVGSVININNLAINLPSILGNRVAPKLWIRPTGSSAPYSEDNNPIINLSGPLSLLDDENLDPYDTADLAQPIAEVPLLYLLDVTAKHINTDNFYPEGLNTTQHYGYQGVWSPYWIETITTSDTSSEDTVNTLHRQLYGDWTPTGYKVNPENKGDIALSAFWQSFHNLFATLRYQTQQGQIAPTASGEATRLFVHQNSNNDAKGFHMEATGYSLGTTSNTASNHSFGVNFSQLFSNLYESHSDNSVASHTTTVALQINNPWLQERFSTSASLAYSYSNHHIKASGYSGKIQTEGKCYSTTLGAALSCSLSLQWRSRPLHFTPFIQAIAVRSNQTAFQESGDKARKFSVHKPLYNLTVPLGIQSAWESKFRLPTYWNIELAYQPVLYQQNPEVNVSLESSGSSWLLSGTTLARNAIAFKGRNQIFIFPKLSVFLDYQGSVSSSTTTHYLHAGTTFKF</sequence>
<gene>
    <name type="primary">pmp18</name>
    <name type="ordered locus">CPn_0471</name>
    <name type="ordered locus">CP_0283</name>
    <name type="ordered locus">CpB0489</name>
</gene>
<organism>
    <name type="scientific">Chlamydia pneumoniae</name>
    <name type="common">Chlamydophila pneumoniae</name>
    <dbReference type="NCBI Taxonomy" id="83558"/>
    <lineage>
        <taxon>Bacteria</taxon>
        <taxon>Pseudomonadati</taxon>
        <taxon>Chlamydiota</taxon>
        <taxon>Chlamydiia</taxon>
        <taxon>Chlamydiales</taxon>
        <taxon>Chlamydiaceae</taxon>
        <taxon>Chlamydia/Chlamydophila group</taxon>
        <taxon>Chlamydia</taxon>
    </lineage>
</organism>